<comment type="function">
    <text evidence="6 7 14">A bicistronic gene producing two proteins that are components of different complexes and have separate properties and functions (PubMed:30559249). Full-length protein is proteolytically cleaved, producing a ~50kDa N-terminal product (Chiffon-A) that forms part of the DDK complex; it is unclear if the C-terminal proteolytic product is stable or functional (Probable). Alternative initiation from an internal ribosome entry site produces a C-terminal ~48kDa product (Chiffon-B or Isoform E) that forms part of the CHAT complex (PubMed:30559249). Involved in regulation of gene expression during embryonic development (PubMed:34908116).</text>
</comment>
<comment type="function">
    <molecule>Chiffon-A</molecule>
    <text evidence="3 5 6">Regulatory component of the Dbf4-dependent kinase (DDK) complex (PubMed:25451925). Required for the amplification stage, but not the preceding endoreplication stage of DNA replication in egg chamber follicle cells of the ovary (PubMed:25451925). May be involved in initiation of DNA replication; activation of the chorion gene origins (PubMed:10477296). May have a role in eye and thoracic bristle development (PubMed:10477296). Required for female fertility; is not required for oogenesis but is required maternally for early embryo development (PubMed:30559249).</text>
</comment>
<comment type="function">
    <molecule>Isoform E</molecule>
    <text evidence="6 7">Component of the CHAT histone acetyltransferase complex, which predominantly acetylates histone H3 (PubMed:30559249). As part of the CHAT complex involved in acetylation of histone H3 on 'Lys-10' (H3K9ac), 'Lys-15' (H3K14ac) and 'Lys-19' (H3K18ac), but not 'Lys-25' (H3K24ac) (PubMed:30559249, PubMed:34908116). May also regulate other histone acetyltransferase complexes (PubMed:34908116). Essential for viability (PubMed:30559249). Not required for early stages of embryonic development (PubMed:34908116). May be involved in zygotic genome activation during embryogenesis (PubMed:34908116).</text>
</comment>
<comment type="subunit">
    <molecule>Chiffon-A</molecule>
    <text evidence="5 6">Component of the Dbf4-dependent kinase (DDK) complex consisting of Cdc7 and the Dbf4 ortholog chif (PubMed:25451925). Interacts with Cdc7; the interaction is direct (PubMed:25451925, PubMed:30559249). Interacts with CG5790 (PubMed:25451925).</text>
</comment>
<comment type="subunit">
    <molecule>Isoform E</molecule>
    <text evidence="6 8">Component of the Chiffon histone acetyltransferase (CHAT) complex consisting of Ada3, Sgf29, Gcn5, chif/chiffon and Ada2b (Isoform A) (PubMed:30559249). Interacts (via C-terminus) with Gcn5; the interaction is direct but weak in the absence of other CHAT components (PubMed:30559249, PubMed:35789507).</text>
</comment>
<comment type="subcellular location">
    <molecule>Chiffon-A</molecule>
    <subcellularLocation>
        <location evidence="7">Nucleus</location>
    </subcellularLocation>
</comment>
<comment type="subcellular location">
    <molecule>Isoform E</molecule>
    <subcellularLocation>
        <location evidence="7">Nucleus</location>
    </subcellularLocation>
</comment>
<comment type="alternative products">
    <event type="alternative splicing"/>
    <event type="alternative initiation"/>
    <isoform>
        <id>Q9NK54-1</id>
        <name evidence="16">A</name>
        <sequence type="displayed"/>
    </isoform>
    <isoform>
        <id>Q9NK54-2</id>
        <name evidence="16">B</name>
        <name evidence="16">D</name>
        <sequence type="described" ref="VSP_012407"/>
    </isoform>
    <isoform>
        <id>Q9NK54-3</id>
        <name evidence="16">E</name>
        <name evidence="11">Chiffon-B</name>
        <sequence type="described" ref="VSP_062565 VSP_012407"/>
    </isoform>
    <text evidence="6 12">Additional isoforms seem to exist (Probable). Experimental confirmation may be lacking for some isoforms (Probable). Isoform E is produced by alternative initiation from an internal ribosome entry site (PubMed:30559249).</text>
</comment>
<comment type="developmental stage">
    <text evidence="3 7">Expressed both maternally and zygotically (PubMed:10477296). Full length mRNA encoding both chiffon-A and chiffon-B is expressed throughout embryonic development, increasing during later developmental stages (PubMed:34908116).</text>
</comment>
<comment type="developmental stage">
    <molecule>Chiffon-A</molecule>
    <text evidence="7">Expressed during early stages of embryonic development from nuclear cycle 3 to 11 with no detectable expression at later stages of embryonic development (at protein level).</text>
</comment>
<comment type="developmental stage">
    <molecule>Isoform E</molecule>
    <text evidence="7">Expressed during early stages of embryonic development from nuclear cycle 10/11 onwards (at protein level).</text>
</comment>
<comment type="PTM">
    <text evidence="5">May be proteolytically cleaved to produce a N-terminal 50 kDa product.</text>
</comment>
<comment type="disruption phenotype">
    <text evidence="6">Adult lethal.</text>
</comment>
<comment type="miscellaneous">
    <text evidence="13">Named after the phenotype of mutant embryos that possess a thin fragile eggshell resembling the chiffon fabric.</text>
</comment>
<comment type="sequence caution" evidence="12">
    <conflict type="erroneous initiation">
        <sequence resource="EMBL-CDS" id="AAL28467"/>
    </conflict>
</comment>
<dbReference type="EMBL" id="AF158178">
    <property type="protein sequence ID" value="AAD48779.1"/>
    <property type="molecule type" value="mRNA"/>
</dbReference>
<dbReference type="EMBL" id="AF158179">
    <property type="protein sequence ID" value="AAD48780.1"/>
    <property type="molecule type" value="mRNA"/>
</dbReference>
<dbReference type="EMBL" id="AE014134">
    <property type="protein sequence ID" value="AAF53530.1"/>
    <property type="molecule type" value="Genomic_DNA"/>
</dbReference>
<dbReference type="EMBL" id="AE014134">
    <property type="protein sequence ID" value="AAG22437.1"/>
    <property type="molecule type" value="Genomic_DNA"/>
</dbReference>
<dbReference type="EMBL" id="AE014134">
    <property type="protein sequence ID" value="AGB93034.1"/>
    <property type="molecule type" value="Genomic_DNA"/>
</dbReference>
<dbReference type="EMBL" id="AE014134">
    <property type="protein sequence ID" value="QJC20912.1"/>
    <property type="molecule type" value="Genomic_DNA"/>
</dbReference>
<dbReference type="EMBL" id="AY060919">
    <property type="protein sequence ID" value="AAL28467.1"/>
    <property type="status" value="ALT_INIT"/>
    <property type="molecule type" value="mRNA"/>
</dbReference>
<dbReference type="EMBL" id="AY119597">
    <property type="protein sequence ID" value="AAM50251.1"/>
    <property type="molecule type" value="mRNA"/>
</dbReference>
<dbReference type="EMBL" id="BT128811">
    <property type="protein sequence ID" value="AEM72507.1"/>
    <property type="molecule type" value="mRNA"/>
</dbReference>
<dbReference type="RefSeq" id="NP_001260499.1">
    <molecule id="Q9NK54-2"/>
    <property type="nucleotide sequence ID" value="NM_001273570.2"/>
</dbReference>
<dbReference type="RefSeq" id="NP_523583.2">
    <molecule id="Q9NK54-1"/>
    <property type="nucleotide sequence ID" value="NM_078859.4"/>
</dbReference>
<dbReference type="RefSeq" id="NP_723965.1">
    <molecule id="Q9NK54-2"/>
    <property type="nucleotide sequence ID" value="NM_165156.3"/>
</dbReference>
<dbReference type="BioGRID" id="60983">
    <property type="interactions" value="6"/>
</dbReference>
<dbReference type="ComplexPortal" id="CPX-2774">
    <property type="entry name" value="CHAT histone acetyltransferase complex"/>
</dbReference>
<dbReference type="FunCoup" id="Q9NK54">
    <property type="interactions" value="78"/>
</dbReference>
<dbReference type="IntAct" id="Q9NK54">
    <property type="interactions" value="4"/>
</dbReference>
<dbReference type="STRING" id="7227.FBpp0080396"/>
<dbReference type="GlyGen" id="Q9NK54">
    <property type="glycosylation" value="5 sites"/>
</dbReference>
<dbReference type="iPTMnet" id="Q9NK54"/>
<dbReference type="PaxDb" id="7227-FBpp0080396"/>
<dbReference type="EnsemblMetazoa" id="FBtr0080838">
    <molecule id="Q9NK54-1"/>
    <property type="protein sequence ID" value="FBpp0080396"/>
    <property type="gene ID" value="FBgn0000307"/>
</dbReference>
<dbReference type="EnsemblMetazoa" id="FBtr0080839">
    <molecule id="Q9NK54-2"/>
    <property type="protein sequence ID" value="FBpp0080397"/>
    <property type="gene ID" value="FBgn0000307"/>
</dbReference>
<dbReference type="EnsemblMetazoa" id="FBtr0321313">
    <molecule id="Q9NK54-2"/>
    <property type="protein sequence ID" value="FBpp0302856"/>
    <property type="gene ID" value="FBgn0000307"/>
</dbReference>
<dbReference type="GeneID" id="34974"/>
<dbReference type="KEGG" id="dme:Dmel_CG5813"/>
<dbReference type="UCSC" id="CG5813-RA">
    <molecule id="Q9NK54-1"/>
    <property type="organism name" value="d. melanogaster"/>
</dbReference>
<dbReference type="AGR" id="FB:FBgn0000307"/>
<dbReference type="CTD" id="34974"/>
<dbReference type="FlyBase" id="FBgn0000307">
    <property type="gene designation" value="chif"/>
</dbReference>
<dbReference type="VEuPathDB" id="VectorBase:FBgn0000307"/>
<dbReference type="eggNOG" id="KOG4139">
    <property type="taxonomic scope" value="Eukaryota"/>
</dbReference>
<dbReference type="GeneTree" id="ENSGT00530000063909"/>
<dbReference type="HOGENOM" id="CLU_237730_0_0_1"/>
<dbReference type="InParanoid" id="Q9NK54"/>
<dbReference type="OMA" id="YEMEPCA"/>
<dbReference type="OrthoDB" id="21380at2759"/>
<dbReference type="PhylomeDB" id="Q9NK54"/>
<dbReference type="Reactome" id="R-DME-176187">
    <property type="pathway name" value="Activation of ATR in response to replication stress"/>
</dbReference>
<dbReference type="Reactome" id="R-DME-68962">
    <property type="pathway name" value="Activation of the pre-replicative complex"/>
</dbReference>
<dbReference type="SignaLink" id="Q9NK54"/>
<dbReference type="BioGRID-ORCS" id="34974">
    <property type="hits" value="1 hit in 3 CRISPR screens"/>
</dbReference>
<dbReference type="ChiTaRS" id="chif">
    <property type="organism name" value="fly"/>
</dbReference>
<dbReference type="GenomeRNAi" id="34974"/>
<dbReference type="PRO" id="PR:Q9NK54"/>
<dbReference type="Proteomes" id="UP000000803">
    <property type="component" value="Chromosome 2L"/>
</dbReference>
<dbReference type="Bgee" id="FBgn0000307">
    <property type="expression patterns" value="Expressed in cleaving embryo and 269 other cell types or tissues"/>
</dbReference>
<dbReference type="ExpressionAtlas" id="Q9NK54">
    <property type="expression patterns" value="baseline and differential"/>
</dbReference>
<dbReference type="GO" id="GO:0031431">
    <property type="term" value="C:Dbf4-dependent protein kinase complex"/>
    <property type="evidence" value="ECO:0000314"/>
    <property type="project" value="FlyBase"/>
</dbReference>
<dbReference type="GO" id="GO:0070775">
    <property type="term" value="C:H3 histone acetyltransferase complex"/>
    <property type="evidence" value="ECO:0000314"/>
    <property type="project" value="FlyBase"/>
</dbReference>
<dbReference type="GO" id="GO:0003677">
    <property type="term" value="F:DNA binding"/>
    <property type="evidence" value="ECO:0007669"/>
    <property type="project" value="UniProtKB-KW"/>
</dbReference>
<dbReference type="GO" id="GO:0030295">
    <property type="term" value="F:protein kinase activator activity"/>
    <property type="evidence" value="ECO:0000314"/>
    <property type="project" value="FlyBase"/>
</dbReference>
<dbReference type="GO" id="GO:0043539">
    <property type="term" value="F:protein serine/threonine kinase activator activity"/>
    <property type="evidence" value="ECO:0000318"/>
    <property type="project" value="GO_Central"/>
</dbReference>
<dbReference type="GO" id="GO:0008270">
    <property type="term" value="F:zinc ion binding"/>
    <property type="evidence" value="ECO:0007669"/>
    <property type="project" value="UniProtKB-KW"/>
</dbReference>
<dbReference type="GO" id="GO:0007304">
    <property type="term" value="P:chorion-containing eggshell formation"/>
    <property type="evidence" value="ECO:0007001"/>
    <property type="project" value="FlyBase"/>
</dbReference>
<dbReference type="GO" id="GO:0006338">
    <property type="term" value="P:chromatin remodeling"/>
    <property type="evidence" value="ECO:0000314"/>
    <property type="project" value="FlyBase"/>
</dbReference>
<dbReference type="GO" id="GO:0006260">
    <property type="term" value="P:DNA replication"/>
    <property type="evidence" value="ECO:0007669"/>
    <property type="project" value="UniProtKB-KW"/>
</dbReference>
<dbReference type="GO" id="GO:0007307">
    <property type="term" value="P:eggshell chorion gene amplification"/>
    <property type="evidence" value="ECO:0000315"/>
    <property type="project" value="FlyBase"/>
</dbReference>
<dbReference type="GO" id="GO:0046716">
    <property type="term" value="P:muscle cell cellular homeostasis"/>
    <property type="evidence" value="ECO:0000315"/>
    <property type="project" value="FlyBase"/>
</dbReference>
<dbReference type="GO" id="GO:0072499">
    <property type="term" value="P:photoreceptor cell axon guidance"/>
    <property type="evidence" value="ECO:0000315"/>
    <property type="project" value="FlyBase"/>
</dbReference>
<dbReference type="GO" id="GO:0045740">
    <property type="term" value="P:positive regulation of DNA replication"/>
    <property type="evidence" value="ECO:0000315"/>
    <property type="project" value="FlyBase"/>
</dbReference>
<dbReference type="GO" id="GO:0010571">
    <property type="term" value="P:positive regulation of nuclear cell cycle DNA replication"/>
    <property type="evidence" value="ECO:0000318"/>
    <property type="project" value="GO_Central"/>
</dbReference>
<dbReference type="GO" id="GO:1901987">
    <property type="term" value="P:regulation of cell cycle phase transition"/>
    <property type="evidence" value="ECO:0000318"/>
    <property type="project" value="GO_Central"/>
</dbReference>
<dbReference type="FunFam" id="6.10.250.3410:FF:000001">
    <property type="entry name" value="Protein DBF4 homolog A"/>
    <property type="match status" value="1"/>
</dbReference>
<dbReference type="Gene3D" id="6.10.250.3410">
    <property type="entry name" value="DBF zinc finger"/>
    <property type="match status" value="1"/>
</dbReference>
<dbReference type="InterPro" id="IPR051590">
    <property type="entry name" value="Replication_Regulatory_Kinase"/>
</dbReference>
<dbReference type="InterPro" id="IPR006572">
    <property type="entry name" value="Znf_DBF"/>
</dbReference>
<dbReference type="InterPro" id="IPR038545">
    <property type="entry name" value="Znf_DBF_sf"/>
</dbReference>
<dbReference type="PANTHER" id="PTHR15375">
    <property type="entry name" value="ACTIVATOR OF S-PHASE KINASE-RELATED"/>
    <property type="match status" value="1"/>
</dbReference>
<dbReference type="PANTHER" id="PTHR15375:SF26">
    <property type="entry name" value="PROTEIN CHIFFON"/>
    <property type="match status" value="1"/>
</dbReference>
<dbReference type="Pfam" id="PF07535">
    <property type="entry name" value="zf-DBF"/>
    <property type="match status" value="1"/>
</dbReference>
<dbReference type="SMART" id="SM00586">
    <property type="entry name" value="ZnF_DBF"/>
    <property type="match status" value="1"/>
</dbReference>
<dbReference type="PROSITE" id="PS51265">
    <property type="entry name" value="ZF_DBF4"/>
    <property type="match status" value="1"/>
</dbReference>
<name>CHIF_DROME</name>
<keyword id="KW-0024">Alternative initiation</keyword>
<keyword id="KW-0025">Alternative splicing</keyword>
<keyword id="KW-0217">Developmental protein</keyword>
<keyword id="KW-0235">DNA replication</keyword>
<keyword id="KW-0238">DNA-binding</keyword>
<keyword id="KW-0479">Metal-binding</keyword>
<keyword id="KW-0539">Nucleus</keyword>
<keyword id="KW-0597">Phosphoprotein</keyword>
<keyword id="KW-1185">Reference proteome</keyword>
<keyword id="KW-0862">Zinc</keyword>
<keyword id="KW-0863">Zinc-finger</keyword>
<gene>
    <name evidence="16" type="primary">chif</name>
    <name evidence="16" type="ORF">CG5813</name>
</gene>
<proteinExistence type="evidence at protein level"/>
<reference key="1">
    <citation type="journal article" date="1999" name="Development">
        <title>The Drosophila chiffon gene is required for chorion gene amplification, and is related to the yeast Dbf4 regulator of DNA replication and cell cycle.</title>
        <authorList>
            <person name="Landis G."/>
            <person name="Tower J."/>
        </authorList>
    </citation>
    <scope>NUCLEOTIDE SEQUENCE [MRNA] (ISOFORMS A AND B)</scope>
    <scope>FUNCTION</scope>
    <scope>DEVELOPMENTAL STAGE</scope>
    <source>
        <strain>Canton-S</strain>
    </source>
</reference>
<reference evidence="12" key="2">
    <citation type="journal article" date="1999" name="Genetics">
        <title>An exploration of the sequence of a 2.9-Mb region of the genome of Drosophila melanogaster: the Adh region.</title>
        <authorList>
            <person name="Ashburner M."/>
            <person name="Misra S."/>
            <person name="Roote J."/>
            <person name="Lewis S.E."/>
            <person name="Blazej R.G."/>
            <person name="Davis T."/>
            <person name="Doyle C."/>
            <person name="Galle R.F."/>
            <person name="George R.A."/>
            <person name="Harris N.L."/>
            <person name="Hartzell G."/>
            <person name="Harvey D.A."/>
            <person name="Hong L."/>
            <person name="Houston K.A."/>
            <person name="Hoskins R.A."/>
            <person name="Johnson G."/>
            <person name="Martin C."/>
            <person name="Moshrefi A.R."/>
            <person name="Palazzolo M."/>
            <person name="Reese M.G."/>
            <person name="Spradling A.C."/>
            <person name="Tsang G."/>
            <person name="Wan K.H."/>
            <person name="Whitelaw K."/>
            <person name="Celniker S.E."/>
            <person name="Rubin G.M."/>
        </authorList>
    </citation>
    <scope>NUCLEOTIDE SEQUENCE [LARGE SCALE GENOMIC DNA]</scope>
    <source>
        <strain>Berkeley</strain>
    </source>
</reference>
<reference key="3">
    <citation type="journal article" date="2000" name="Science">
        <title>The genome sequence of Drosophila melanogaster.</title>
        <authorList>
            <person name="Adams M.D."/>
            <person name="Celniker S.E."/>
            <person name="Holt R.A."/>
            <person name="Evans C.A."/>
            <person name="Gocayne J.D."/>
            <person name="Amanatides P.G."/>
            <person name="Scherer S.E."/>
            <person name="Li P.W."/>
            <person name="Hoskins R.A."/>
            <person name="Galle R.F."/>
            <person name="George R.A."/>
            <person name="Lewis S.E."/>
            <person name="Richards S."/>
            <person name="Ashburner M."/>
            <person name="Henderson S.N."/>
            <person name="Sutton G.G."/>
            <person name="Wortman J.R."/>
            <person name="Yandell M.D."/>
            <person name="Zhang Q."/>
            <person name="Chen L.X."/>
            <person name="Brandon R.C."/>
            <person name="Rogers Y.-H.C."/>
            <person name="Blazej R.G."/>
            <person name="Champe M."/>
            <person name="Pfeiffer B.D."/>
            <person name="Wan K.H."/>
            <person name="Doyle C."/>
            <person name="Baxter E.G."/>
            <person name="Helt G."/>
            <person name="Nelson C.R."/>
            <person name="Miklos G.L.G."/>
            <person name="Abril J.F."/>
            <person name="Agbayani A."/>
            <person name="An H.-J."/>
            <person name="Andrews-Pfannkoch C."/>
            <person name="Baldwin D."/>
            <person name="Ballew R.M."/>
            <person name="Basu A."/>
            <person name="Baxendale J."/>
            <person name="Bayraktaroglu L."/>
            <person name="Beasley E.M."/>
            <person name="Beeson K.Y."/>
            <person name="Benos P.V."/>
            <person name="Berman B.P."/>
            <person name="Bhandari D."/>
            <person name="Bolshakov S."/>
            <person name="Borkova D."/>
            <person name="Botchan M.R."/>
            <person name="Bouck J."/>
            <person name="Brokstein P."/>
            <person name="Brottier P."/>
            <person name="Burtis K.C."/>
            <person name="Busam D.A."/>
            <person name="Butler H."/>
            <person name="Cadieu E."/>
            <person name="Center A."/>
            <person name="Chandra I."/>
            <person name="Cherry J.M."/>
            <person name="Cawley S."/>
            <person name="Dahlke C."/>
            <person name="Davenport L.B."/>
            <person name="Davies P."/>
            <person name="de Pablos B."/>
            <person name="Delcher A."/>
            <person name="Deng Z."/>
            <person name="Mays A.D."/>
            <person name="Dew I."/>
            <person name="Dietz S.M."/>
            <person name="Dodson K."/>
            <person name="Doup L.E."/>
            <person name="Downes M."/>
            <person name="Dugan-Rocha S."/>
            <person name="Dunkov B.C."/>
            <person name="Dunn P."/>
            <person name="Durbin K.J."/>
            <person name="Evangelista C.C."/>
            <person name="Ferraz C."/>
            <person name="Ferriera S."/>
            <person name="Fleischmann W."/>
            <person name="Fosler C."/>
            <person name="Gabrielian A.E."/>
            <person name="Garg N.S."/>
            <person name="Gelbart W.M."/>
            <person name="Glasser K."/>
            <person name="Glodek A."/>
            <person name="Gong F."/>
            <person name="Gorrell J.H."/>
            <person name="Gu Z."/>
            <person name="Guan P."/>
            <person name="Harris M."/>
            <person name="Harris N.L."/>
            <person name="Harvey D.A."/>
            <person name="Heiman T.J."/>
            <person name="Hernandez J.R."/>
            <person name="Houck J."/>
            <person name="Hostin D."/>
            <person name="Houston K.A."/>
            <person name="Howland T.J."/>
            <person name="Wei M.-H."/>
            <person name="Ibegwam C."/>
            <person name="Jalali M."/>
            <person name="Kalush F."/>
            <person name="Karpen G.H."/>
            <person name="Ke Z."/>
            <person name="Kennison J.A."/>
            <person name="Ketchum K.A."/>
            <person name="Kimmel B.E."/>
            <person name="Kodira C.D."/>
            <person name="Kraft C.L."/>
            <person name="Kravitz S."/>
            <person name="Kulp D."/>
            <person name="Lai Z."/>
            <person name="Lasko P."/>
            <person name="Lei Y."/>
            <person name="Levitsky A.A."/>
            <person name="Li J.H."/>
            <person name="Li Z."/>
            <person name="Liang Y."/>
            <person name="Lin X."/>
            <person name="Liu X."/>
            <person name="Mattei B."/>
            <person name="McIntosh T.C."/>
            <person name="McLeod M.P."/>
            <person name="McPherson D."/>
            <person name="Merkulov G."/>
            <person name="Milshina N.V."/>
            <person name="Mobarry C."/>
            <person name="Morris J."/>
            <person name="Moshrefi A."/>
            <person name="Mount S.M."/>
            <person name="Moy M."/>
            <person name="Murphy B."/>
            <person name="Murphy L."/>
            <person name="Muzny D.M."/>
            <person name="Nelson D.L."/>
            <person name="Nelson D.R."/>
            <person name="Nelson K.A."/>
            <person name="Nixon K."/>
            <person name="Nusskern D.R."/>
            <person name="Pacleb J.M."/>
            <person name="Palazzolo M."/>
            <person name="Pittman G.S."/>
            <person name="Pan S."/>
            <person name="Pollard J."/>
            <person name="Puri V."/>
            <person name="Reese M.G."/>
            <person name="Reinert K."/>
            <person name="Remington K."/>
            <person name="Saunders R.D.C."/>
            <person name="Scheeler F."/>
            <person name="Shen H."/>
            <person name="Shue B.C."/>
            <person name="Siden-Kiamos I."/>
            <person name="Simpson M."/>
            <person name="Skupski M.P."/>
            <person name="Smith T.J."/>
            <person name="Spier E."/>
            <person name="Spradling A.C."/>
            <person name="Stapleton M."/>
            <person name="Strong R."/>
            <person name="Sun E."/>
            <person name="Svirskas R."/>
            <person name="Tector C."/>
            <person name="Turner R."/>
            <person name="Venter E."/>
            <person name="Wang A.H."/>
            <person name="Wang X."/>
            <person name="Wang Z.-Y."/>
            <person name="Wassarman D.A."/>
            <person name="Weinstock G.M."/>
            <person name="Weissenbach J."/>
            <person name="Williams S.M."/>
            <person name="Woodage T."/>
            <person name="Worley K.C."/>
            <person name="Wu D."/>
            <person name="Yang S."/>
            <person name="Yao Q.A."/>
            <person name="Ye J."/>
            <person name="Yeh R.-F."/>
            <person name="Zaveri J.S."/>
            <person name="Zhan M."/>
            <person name="Zhang G."/>
            <person name="Zhao Q."/>
            <person name="Zheng L."/>
            <person name="Zheng X.H."/>
            <person name="Zhong F.N."/>
            <person name="Zhong W."/>
            <person name="Zhou X."/>
            <person name="Zhu S.C."/>
            <person name="Zhu X."/>
            <person name="Smith H.O."/>
            <person name="Gibbs R.A."/>
            <person name="Myers E.W."/>
            <person name="Rubin G.M."/>
            <person name="Venter J.C."/>
        </authorList>
    </citation>
    <scope>NUCLEOTIDE SEQUENCE [LARGE SCALE GENOMIC DNA]</scope>
    <source>
        <strain>Berkeley</strain>
    </source>
</reference>
<reference key="4">
    <citation type="journal article" date="2002" name="Genome Biol.">
        <title>Annotation of the Drosophila melanogaster euchromatic genome: a systematic review.</title>
        <authorList>
            <person name="Misra S."/>
            <person name="Crosby M.A."/>
            <person name="Mungall C.J."/>
            <person name="Matthews B.B."/>
            <person name="Campbell K.S."/>
            <person name="Hradecky P."/>
            <person name="Huang Y."/>
            <person name="Kaminker J.S."/>
            <person name="Millburn G.H."/>
            <person name="Prochnik S.E."/>
            <person name="Smith C.D."/>
            <person name="Tupy J.L."/>
            <person name="Whitfield E.J."/>
            <person name="Bayraktaroglu L."/>
            <person name="Berman B.P."/>
            <person name="Bettencourt B.R."/>
            <person name="Celniker S.E."/>
            <person name="de Grey A.D.N.J."/>
            <person name="Drysdale R.A."/>
            <person name="Harris N.L."/>
            <person name="Richter J."/>
            <person name="Russo S."/>
            <person name="Schroeder A.J."/>
            <person name="Shu S.Q."/>
            <person name="Stapleton M."/>
            <person name="Yamada C."/>
            <person name="Ashburner M."/>
            <person name="Gelbart W.M."/>
            <person name="Rubin G.M."/>
            <person name="Lewis S.E."/>
        </authorList>
    </citation>
    <scope>GENOME REANNOTATION</scope>
    <scope>ALTERNATIVE SPLICING</scope>
    <source>
        <strain>Berkeley</strain>
    </source>
</reference>
<reference key="5">
    <citation type="journal article" date="2002" name="Genome Biol.">
        <title>A Drosophila full-length cDNA resource.</title>
        <authorList>
            <person name="Stapleton M."/>
            <person name="Carlson J.W."/>
            <person name="Brokstein P."/>
            <person name="Yu C."/>
            <person name="Champe M."/>
            <person name="George R.A."/>
            <person name="Guarin H."/>
            <person name="Kronmiller B."/>
            <person name="Pacleb J.M."/>
            <person name="Park S."/>
            <person name="Wan K.H."/>
            <person name="Rubin G.M."/>
            <person name="Celniker S.E."/>
        </authorList>
    </citation>
    <scope>NUCLEOTIDE SEQUENCE [LARGE SCALE MRNA] OF 1-712 AND 1506-1695 (ISOFORM B)</scope>
    <source>
        <strain>Berkeley</strain>
        <tissue>Embryo</tissue>
        <tissue>Ovary</tissue>
    </source>
</reference>
<reference evidence="15" key="6">
    <citation type="submission" date="2011-08" db="EMBL/GenBank/DDBJ databases">
        <authorList>
            <person name="Carlson J."/>
            <person name="Booth B."/>
            <person name="Frise E."/>
            <person name="Park S."/>
            <person name="Wan K."/>
            <person name="Yu C."/>
            <person name="Celniker S."/>
        </authorList>
    </citation>
    <scope>NUCLEOTIDE SEQUENCE [LARGE SCALE MRNA] OF 661-1695 (ISOFORM B)</scope>
    <source>
        <strain evidence="15">Berkeley</strain>
    </source>
</reference>
<reference key="7">
    <citation type="journal article" date="2008" name="J. Proteome Res.">
        <title>Phosphoproteome analysis of Drosophila melanogaster embryos.</title>
        <authorList>
            <person name="Zhai B."/>
            <person name="Villen J."/>
            <person name="Beausoleil S.A."/>
            <person name="Mintseris J."/>
            <person name="Gygi S.P."/>
        </authorList>
    </citation>
    <scope>PHOSPHORYLATION [LARGE SCALE ANALYSIS] AT SER-306; SER-307; SER-406; SER-407; SER-417; SER-432; SER-435; SER-467; SER-542; SER-543; SER-544; THR-1081; SER-1091 AND SER-1092</scope>
    <scope>IDENTIFICATION BY MASS SPECTROMETRY</scope>
    <source>
        <tissue>Embryo</tissue>
    </source>
</reference>
<reference key="8">
    <citation type="journal article" date="2015" name="J. Biol. Chem.">
        <title>Characterization of a Drosophila ortholog of the Cdc7 kinase: a role for Cdc7 in endoreplication independent of Chiffon.</title>
        <authorList>
            <person name="Stephenson R."/>
            <person name="Hosler M.R."/>
            <person name="Gavande N.S."/>
            <person name="Ghosh A.K."/>
            <person name="Weake V.M."/>
        </authorList>
    </citation>
    <scope>FUNCTION</scope>
    <scope>INTERACTION WITH CDC7 AND CG5790</scope>
    <scope>PROTEOLYTIC CLEAVAGE</scope>
</reference>
<reference key="9">
    <citation type="journal article" date="2019" name="J. Cell Sci.">
        <title>The Drosophila Dbf4 ortholog Chiffon forms a complex with Gcn5 that is necessary for histone acetylation and viability.</title>
        <authorList>
            <person name="Torres-Zelada E.F."/>
            <person name="Stephenson R.E."/>
            <person name="Alpsoy A."/>
            <person name="Anderson B.D."/>
            <person name="Swanson S.K."/>
            <person name="Florens L."/>
            <person name="Dykhuizen E.C."/>
            <person name="Washburn M.P."/>
            <person name="Weake V.M."/>
        </authorList>
    </citation>
    <scope>FUNCTION</scope>
    <scope>IDENTIFICATION IN THE CHAT COMPLEX</scope>
    <scope>INTERACTION WITH CDC7 AND GCN5</scope>
    <scope>DISRUPTION PHENOTYPE</scope>
    <scope>IDENTIFICATION BY MASS SPECTROMETRY</scope>
</reference>
<reference key="10">
    <citation type="journal article" date="2022" name="Insect Mol. Biol.">
        <title>The interaction between the Dbf4 ortholog Chiffon and Gcn5 is conserved in Dipteran insect species.</title>
        <authorList>
            <person name="George S."/>
            <person name="Blum H.R."/>
            <person name="Torres-Zelada E.F."/>
            <person name="Estep G.N."/>
            <person name="Hegazy Y.A."/>
            <person name="Speer G.M."/>
            <person name="Weake V.M."/>
        </authorList>
    </citation>
    <scope>INTERACTION WITH GCN5</scope>
</reference>
<reference key="11">
    <citation type="journal article" date="2022" name="J. Cell Sci.">
        <title>Chiffon triggers global histone H3 acetylation and expression of developmental genes in Drosophila embryos.</title>
        <authorList>
            <person name="Torres-Zelada E.F."/>
            <person name="George S."/>
            <person name="Blum H.R."/>
            <person name="Weake V.M."/>
        </authorList>
    </citation>
    <scope>FUNCTION</scope>
    <scope>SUBCELLULAR LOCATION</scope>
    <scope>DEVELOPMENTAL STAGE</scope>
</reference>
<feature type="chain" id="PRO_0000089644" description="Protein chiffon">
    <location>
        <begin position="1"/>
        <end position="1711"/>
    </location>
</feature>
<feature type="chain" id="PRO_0000462408" description="Chiffon-A">
    <location>
        <begin position="1"/>
        <end status="unknown"/>
    </location>
</feature>
<feature type="chain" id="PRO_0000462409" description="Chiffon-C">
    <location>
        <begin status="unknown"/>
        <end position="1711"/>
    </location>
</feature>
<feature type="zinc finger region" description="DBF4-type" evidence="1">
    <location>
        <begin position="307"/>
        <end position="356"/>
    </location>
</feature>
<feature type="DNA-binding region" description="A.T hook">
    <location>
        <begin position="493"/>
        <end position="505"/>
    </location>
</feature>
<feature type="region of interest" description="Sufficient for interaction with and activation of Cdc7" evidence="5 6">
    <location>
        <begin position="1"/>
        <end position="400"/>
    </location>
</feature>
<feature type="region of interest" description="Disordered" evidence="2">
    <location>
        <begin position="1"/>
        <end position="31"/>
    </location>
</feature>
<feature type="region of interest" description="Disordered" evidence="2">
    <location>
        <begin position="87"/>
        <end position="129"/>
    </location>
</feature>
<feature type="region of interest" description="Disordered" evidence="2">
    <location>
        <begin position="244"/>
        <end position="307"/>
    </location>
</feature>
<feature type="region of interest" description="Disordered" evidence="2">
    <location>
        <begin position="365"/>
        <end position="507"/>
    </location>
</feature>
<feature type="region of interest" description="Disordered" evidence="2">
    <location>
        <begin position="531"/>
        <end position="647"/>
    </location>
</feature>
<feature type="region of interest" description="Disordered" evidence="2">
    <location>
        <begin position="733"/>
        <end position="771"/>
    </location>
</feature>
<feature type="region of interest" description="Disordered" evidence="2">
    <location>
        <begin position="791"/>
        <end position="817"/>
    </location>
</feature>
<feature type="region of interest" description="Disordered" evidence="2">
    <location>
        <begin position="908"/>
        <end position="945"/>
    </location>
</feature>
<feature type="region of interest" description="Disordered" evidence="2">
    <location>
        <begin position="1005"/>
        <end position="1025"/>
    </location>
</feature>
<feature type="region of interest" description="Disordered" evidence="2">
    <location>
        <begin position="1055"/>
        <end position="1157"/>
    </location>
</feature>
<feature type="region of interest" description="Disordered" evidence="2">
    <location>
        <begin position="1271"/>
        <end position="1290"/>
    </location>
</feature>
<feature type="region of interest" description="Disordered" evidence="2">
    <location>
        <begin position="1303"/>
        <end position="1329"/>
    </location>
</feature>
<feature type="region of interest" description="Disordered" evidence="2">
    <location>
        <begin position="1343"/>
        <end position="1370"/>
    </location>
</feature>
<feature type="region of interest" description="Disordered" evidence="2">
    <location>
        <begin position="1383"/>
        <end position="1644"/>
    </location>
</feature>
<feature type="region of interest" description="Sufficient for interaction with Gcn5" evidence="6">
    <location>
        <begin position="1400"/>
        <end position="1695"/>
    </location>
</feature>
<feature type="compositionally biased region" description="Low complexity" evidence="2">
    <location>
        <begin position="10"/>
        <end position="30"/>
    </location>
</feature>
<feature type="compositionally biased region" description="Low complexity" evidence="2">
    <location>
        <begin position="97"/>
        <end position="109"/>
    </location>
</feature>
<feature type="compositionally biased region" description="Acidic residues" evidence="2">
    <location>
        <begin position="365"/>
        <end position="378"/>
    </location>
</feature>
<feature type="compositionally biased region" description="Polar residues" evidence="2">
    <location>
        <begin position="429"/>
        <end position="439"/>
    </location>
</feature>
<feature type="compositionally biased region" description="Low complexity" evidence="2">
    <location>
        <begin position="445"/>
        <end position="454"/>
    </location>
</feature>
<feature type="compositionally biased region" description="Polar residues" evidence="2">
    <location>
        <begin position="537"/>
        <end position="546"/>
    </location>
</feature>
<feature type="compositionally biased region" description="Basic and acidic residues" evidence="2">
    <location>
        <begin position="549"/>
        <end position="560"/>
    </location>
</feature>
<feature type="compositionally biased region" description="Low complexity" evidence="2">
    <location>
        <begin position="563"/>
        <end position="575"/>
    </location>
</feature>
<feature type="compositionally biased region" description="Basic residues" evidence="2">
    <location>
        <begin position="588"/>
        <end position="601"/>
    </location>
</feature>
<feature type="compositionally biased region" description="Polar residues" evidence="2">
    <location>
        <begin position="793"/>
        <end position="812"/>
    </location>
</feature>
<feature type="compositionally biased region" description="Basic and acidic residues" evidence="2">
    <location>
        <begin position="908"/>
        <end position="932"/>
    </location>
</feature>
<feature type="compositionally biased region" description="Low complexity" evidence="2">
    <location>
        <begin position="1006"/>
        <end position="1018"/>
    </location>
</feature>
<feature type="compositionally biased region" description="Polar residues" evidence="2">
    <location>
        <begin position="1092"/>
        <end position="1101"/>
    </location>
</feature>
<feature type="compositionally biased region" description="Low complexity" evidence="2">
    <location>
        <begin position="1398"/>
        <end position="1407"/>
    </location>
</feature>
<feature type="compositionally biased region" description="Basic and acidic residues" evidence="2">
    <location>
        <begin position="1435"/>
        <end position="1445"/>
    </location>
</feature>
<feature type="compositionally biased region" description="Acidic residues" evidence="2">
    <location>
        <begin position="1453"/>
        <end position="1475"/>
    </location>
</feature>
<feature type="compositionally biased region" description="Acidic residues" evidence="2">
    <location>
        <begin position="1483"/>
        <end position="1518"/>
    </location>
</feature>
<feature type="compositionally biased region" description="Polar residues" evidence="2">
    <location>
        <begin position="1536"/>
        <end position="1545"/>
    </location>
</feature>
<feature type="compositionally biased region" description="Polar residues" evidence="2">
    <location>
        <begin position="1556"/>
        <end position="1591"/>
    </location>
</feature>
<feature type="binding site" evidence="1">
    <location>
        <position position="314"/>
    </location>
    <ligand>
        <name>Zn(2+)</name>
        <dbReference type="ChEBI" id="CHEBI:29105"/>
    </ligand>
</feature>
<feature type="binding site" evidence="1">
    <location>
        <position position="317"/>
    </location>
    <ligand>
        <name>Zn(2+)</name>
        <dbReference type="ChEBI" id="CHEBI:29105"/>
    </ligand>
</feature>
<feature type="binding site" evidence="1">
    <location>
        <position position="327"/>
    </location>
    <ligand>
        <name>Zn(2+)</name>
        <dbReference type="ChEBI" id="CHEBI:29105"/>
    </ligand>
</feature>
<feature type="binding site" evidence="1">
    <location>
        <position position="333"/>
    </location>
    <ligand>
        <name>Zn(2+)</name>
        <dbReference type="ChEBI" id="CHEBI:29105"/>
    </ligand>
</feature>
<feature type="modified residue" description="Phosphoserine" evidence="4">
    <location>
        <position position="306"/>
    </location>
</feature>
<feature type="modified residue" description="Phosphoserine" evidence="4">
    <location>
        <position position="307"/>
    </location>
</feature>
<feature type="modified residue" description="Phosphoserine" evidence="4">
    <location>
        <position position="406"/>
    </location>
</feature>
<feature type="modified residue" description="Phosphoserine" evidence="4">
    <location>
        <position position="407"/>
    </location>
</feature>
<feature type="modified residue" description="Phosphoserine" evidence="4">
    <location>
        <position position="417"/>
    </location>
</feature>
<feature type="modified residue" description="Phosphoserine" evidence="4">
    <location>
        <position position="432"/>
    </location>
</feature>
<feature type="modified residue" description="Phosphoserine" evidence="4">
    <location>
        <position position="435"/>
    </location>
</feature>
<feature type="modified residue" description="Phosphoserine" evidence="4">
    <location>
        <position position="467"/>
    </location>
</feature>
<feature type="modified residue" description="Phosphoserine" evidence="4">
    <location>
        <position position="542"/>
    </location>
</feature>
<feature type="modified residue" description="Phosphoserine" evidence="4">
    <location>
        <position position="543"/>
    </location>
</feature>
<feature type="modified residue" description="Phosphoserine" evidence="4">
    <location>
        <position position="544"/>
    </location>
</feature>
<feature type="modified residue" description="Phosphothreonine" evidence="4">
    <location>
        <position position="1081"/>
    </location>
</feature>
<feature type="modified residue" description="Phosphoserine" evidence="4">
    <location>
        <position position="1091"/>
    </location>
</feature>
<feature type="modified residue" description="Phosphoserine" evidence="4">
    <location>
        <position position="1092"/>
    </location>
</feature>
<feature type="splice variant" id="VSP_062565" description="In isoform E." evidence="12">
    <location>
        <begin position="1"/>
        <end position="1119"/>
    </location>
</feature>
<feature type="splice variant" id="VSP_012407" description="In isoform B and isoform E." evidence="9 10">
    <original>TCASSSSMRNAWRRTQRRAISAACISAAPSARVPN</original>
    <variation>VRVTCRRLRAPFRRFRYRR</variation>
    <location>
        <begin position="1677"/>
        <end position="1711"/>
    </location>
</feature>
<feature type="sequence conflict" description="In Ref. 5; AAM50251." evidence="12" ref="5">
    <original>I</original>
    <variation>K</variation>
    <location>
        <position position="709"/>
    </location>
</feature>
<feature type="sequence conflict" description="In Ref. 5; AAM50251." evidence="12" ref="5">
    <original>E</original>
    <variation>K</variation>
    <location>
        <position position="712"/>
    </location>
</feature>
<feature type="sequence conflict" description="In Ref. 1; AAD48779/AAD48780." evidence="12" ref="1">
    <original>L</original>
    <variation>F</variation>
    <location>
        <position position="837"/>
    </location>
</feature>
<organism evidence="17">
    <name type="scientific">Drosophila melanogaster</name>
    <name type="common">Fruit fly</name>
    <dbReference type="NCBI Taxonomy" id="7227"/>
    <lineage>
        <taxon>Eukaryota</taxon>
        <taxon>Metazoa</taxon>
        <taxon>Ecdysozoa</taxon>
        <taxon>Arthropoda</taxon>
        <taxon>Hexapoda</taxon>
        <taxon>Insecta</taxon>
        <taxon>Pterygota</taxon>
        <taxon>Neoptera</taxon>
        <taxon>Endopterygota</taxon>
        <taxon>Diptera</taxon>
        <taxon>Brachycera</taxon>
        <taxon>Muscomorpha</taxon>
        <taxon>Ephydroidea</taxon>
        <taxon>Drosophilidae</taxon>
        <taxon>Drosophila</taxon>
        <taxon>Sophophora</taxon>
    </lineage>
</organism>
<evidence type="ECO:0000255" key="1">
    <source>
        <dbReference type="PROSITE-ProRule" id="PRU00600"/>
    </source>
</evidence>
<evidence type="ECO:0000256" key="2">
    <source>
        <dbReference type="SAM" id="MobiDB-lite"/>
    </source>
</evidence>
<evidence type="ECO:0000269" key="3">
    <source>
    </source>
</evidence>
<evidence type="ECO:0000269" key="4">
    <source>
    </source>
</evidence>
<evidence type="ECO:0000269" key="5">
    <source>
    </source>
</evidence>
<evidence type="ECO:0000269" key="6">
    <source>
    </source>
</evidence>
<evidence type="ECO:0000269" key="7">
    <source>
    </source>
</evidence>
<evidence type="ECO:0000269" key="8">
    <source>
    </source>
</evidence>
<evidence type="ECO:0000303" key="9">
    <source>
    </source>
</evidence>
<evidence type="ECO:0000303" key="10">
    <source>
    </source>
</evidence>
<evidence type="ECO:0000303" key="11">
    <source>
    </source>
</evidence>
<evidence type="ECO:0000305" key="12"/>
<evidence type="ECO:0000305" key="13">
    <source>
    </source>
</evidence>
<evidence type="ECO:0000305" key="14">
    <source>
    </source>
</evidence>
<evidence type="ECO:0000312" key="15">
    <source>
        <dbReference type="EMBL" id="AEM72507.1"/>
    </source>
</evidence>
<evidence type="ECO:0000312" key="16">
    <source>
        <dbReference type="FlyBase" id="FBgn0000307"/>
    </source>
</evidence>
<evidence type="ECO:0000312" key="17">
    <source>
        <dbReference type="Proteomes" id="UP000000803"/>
    </source>
</evidence>
<sequence>MQPQSDKQSASRLATTTSHSTAAASATAATPPKVKVIKSKRPLCHFKFYLDICDHQLAKRIESDIKALGGHLEFFLSDDITHFVTDKPEVIGGTSGTPGTPSTPGTPTSHYQQNDGSARKPNQRQSRADAILSRVRRSTVGVVNSGNSTPTTSLKRSYTIWQTDYAQRFIKRIQTELKQYLEGKKEGGGGSTSASPHHIQLKKQYVKIESVKRNYRPYYHLIKQPDDWPKIDLSSEDGAFRLLTKSKTKDKEHSMTRKPLGSRTSQKDKQAAGEAKPLQHPSLQELKKQSAIPNSPRSNCREPIDSSEKQGGVCEICKLEYDILNIHLQSKDHELFAKNSDNFLALDTLIQSSADVNRFLEEEPVESELDMDVDESLSNEELQSPRQRPSPALREKSKRITKGKHSSEKFQGVAVASPQTPFPGAKKVQGNSPGSLSELQRQEHPTTAAATPTTNSGRRKTQNSGLSPPKRAMLPPSSIYKVVETREECATPPRGRGRPPNQVDSPSLIVKFQKIRQTELQRLNGEAENFMFPRTAVPTTRSSSELPTDVDRQTTSDVRGRYSISSASLDTSTSEAETKESSGLPTSIRKRAQAVGRRRKVGGAAAQDVFQRQLSTGSSSSNSNQQRFPSAPIQPEEGPQPQPKPQLKIKIKQEQLVATRKSSRTATAIVTAATASSHQQQQLRQTTCRKMANKLEDRMGELVKPKIKIKKEVIEEQKVKELEDLEEILDKELDEEVDSSCSSGSDEDYIAGSQRRITAAPRKSTDTREQRAARRLSRLTINRSAGELELTEVKTSPSKSRTKIQKPSSPTKNKVKQTKAVPPAIDLFFDCSKSERLREMQYTFESLPSGELWNRVFLRQDAGEENYYTYYGSTNYRKLPYEMGPIPMAKTLPAHSCALCREASEVKQDKGEQIKLEDQKPAPKKEVKKEEEVQSSSSSATYKNKKLHLLQRYQQEQEQLQQLEGNSLATAGAKCDSKASTPELLEREFASGSMGDRVQLIERVRSTSSSSCSNSQRSGITCRNKQLARIAELPPRKSPREHASTLALVSCIIRQRQDSQSKTNSEAEEPPPPVAAPKLKTPIKQEPVAPSSPRTTRSQAATPVEELRFATEISETVKRMRRGQNKYDHSPPAPVPTPATSSPVRSRRLTPAARNQSQIYSRRLEFATSQRESSASALLGKRKRRVNPSVAGTVRPTTQNLPGTGAYRGVRKLPSKKGLLEYEMETCALKALDQARQYCNPGFVAWQLDKYLELAGKEYDIEFDQISPEVESEGREERLVNTPQTPPPTDCFTSEFDLCDLIMGSAGSGDDDEDVSRGNPPGSGRRMSNLNLYASYYRKRKSLKSNRTGWPKAQRRRNAGGLGGSRALPDERINFQKMGLAELHPIKQEPMETEEEQTTTTTTTTTTSATRGNLLSKDDEDDEGGGNSPSGGSPADDKQNSREDAVMTPPATDVDEQAEPQADEMESLPDEDETMADSVDQQQDVEAEIEATDADVEEEEEEEDEDEDVFEDAYEEQDMGIQKTEPHEKRARIPSISVTTPPEDSSQGKKLLLTLHNGQRLQATSTPSTGQVQQHQRRTPQLNGSLGSCISPSEKLGDNSDIFTVSSDGLDTDLDLSNTQAGDSHEHCPHQTTPKRKFDISKYAPPNSGKAASSCAAEAATAAVKSLAISQFLKKETCASSSSMRNAWRRTQRRAISAACISAAPSARVPN</sequence>
<protein>
    <recommendedName>
        <fullName evidence="16">Protein chiffon</fullName>
    </recommendedName>
    <component>
        <recommendedName>
            <fullName evidence="11">Chiffon-A</fullName>
        </recommendedName>
        <alternativeName>
            <fullName evidence="14">Chiffon-N</fullName>
        </alternativeName>
    </component>
    <component>
        <recommendedName>
            <fullName evidence="12">Chiffon-C</fullName>
        </recommendedName>
    </component>
</protein>
<accession>Q9NK54</accession>
<accession>A0A6H2EHD1</accession>
<accession>G2J5V4</accession>
<accession>M9PD16</accession>
<accession>Q8MRI8</accession>
<accession>Q95S82</accession>
<accession>Q9NK53</accession>
<accession>Q9U9R4</accession>
<accession>Q9U9R5</accession>
<accession>Q9VJL0</accession>
<accession>Q9VJL1</accession>